<evidence type="ECO:0000255" key="1">
    <source>
        <dbReference type="HAMAP-Rule" id="MF_00145"/>
    </source>
</evidence>
<reference key="1">
    <citation type="submission" date="2007-10" db="EMBL/GenBank/DDBJ databases">
        <title>Complete sequence of Desulfococcus oleovorans Hxd3.</title>
        <authorList>
            <consortium name="US DOE Joint Genome Institute"/>
            <person name="Copeland A."/>
            <person name="Lucas S."/>
            <person name="Lapidus A."/>
            <person name="Barry K."/>
            <person name="Glavina del Rio T."/>
            <person name="Dalin E."/>
            <person name="Tice H."/>
            <person name="Pitluck S."/>
            <person name="Kiss H."/>
            <person name="Brettin T."/>
            <person name="Bruce D."/>
            <person name="Detter J.C."/>
            <person name="Han C."/>
            <person name="Schmutz J."/>
            <person name="Larimer F."/>
            <person name="Land M."/>
            <person name="Hauser L."/>
            <person name="Kyrpides N."/>
            <person name="Kim E."/>
            <person name="Wawrik B."/>
            <person name="Richardson P."/>
        </authorList>
    </citation>
    <scope>NUCLEOTIDE SEQUENCE [LARGE SCALE GENOMIC DNA]</scope>
    <source>
        <strain>DSM 6200 / JCM 39069 / Hxd3</strain>
    </source>
</reference>
<gene>
    <name evidence="1" type="primary">pgk</name>
    <name type="ordered locus">Dole_0677</name>
</gene>
<organism>
    <name type="scientific">Desulfosudis oleivorans (strain DSM 6200 / JCM 39069 / Hxd3)</name>
    <name type="common">Desulfococcus oleovorans</name>
    <dbReference type="NCBI Taxonomy" id="96561"/>
    <lineage>
        <taxon>Bacteria</taxon>
        <taxon>Pseudomonadati</taxon>
        <taxon>Thermodesulfobacteriota</taxon>
        <taxon>Desulfobacteria</taxon>
        <taxon>Desulfobacterales</taxon>
        <taxon>Desulfosudaceae</taxon>
        <taxon>Desulfosudis</taxon>
    </lineage>
</organism>
<name>PGK_DESOH</name>
<protein>
    <recommendedName>
        <fullName evidence="1">Phosphoglycerate kinase</fullName>
        <ecNumber evidence="1">2.7.2.3</ecNumber>
    </recommendedName>
</protein>
<dbReference type="EC" id="2.7.2.3" evidence="1"/>
<dbReference type="EMBL" id="CP000859">
    <property type="protein sequence ID" value="ABW66487.1"/>
    <property type="molecule type" value="Genomic_DNA"/>
</dbReference>
<dbReference type="RefSeq" id="WP_012174106.1">
    <property type="nucleotide sequence ID" value="NC_009943.1"/>
</dbReference>
<dbReference type="SMR" id="A8ZUS4"/>
<dbReference type="STRING" id="96561.Dole_0677"/>
<dbReference type="KEGG" id="dol:Dole_0677"/>
<dbReference type="eggNOG" id="COG0126">
    <property type="taxonomic scope" value="Bacteria"/>
</dbReference>
<dbReference type="HOGENOM" id="CLU_025427_0_2_7"/>
<dbReference type="OrthoDB" id="9808460at2"/>
<dbReference type="UniPathway" id="UPA00109">
    <property type="reaction ID" value="UER00185"/>
</dbReference>
<dbReference type="Proteomes" id="UP000008561">
    <property type="component" value="Chromosome"/>
</dbReference>
<dbReference type="GO" id="GO:0005829">
    <property type="term" value="C:cytosol"/>
    <property type="evidence" value="ECO:0007669"/>
    <property type="project" value="TreeGrafter"/>
</dbReference>
<dbReference type="GO" id="GO:0043531">
    <property type="term" value="F:ADP binding"/>
    <property type="evidence" value="ECO:0007669"/>
    <property type="project" value="TreeGrafter"/>
</dbReference>
<dbReference type="GO" id="GO:0005524">
    <property type="term" value="F:ATP binding"/>
    <property type="evidence" value="ECO:0007669"/>
    <property type="project" value="UniProtKB-KW"/>
</dbReference>
<dbReference type="GO" id="GO:0004618">
    <property type="term" value="F:phosphoglycerate kinase activity"/>
    <property type="evidence" value="ECO:0007669"/>
    <property type="project" value="UniProtKB-UniRule"/>
</dbReference>
<dbReference type="GO" id="GO:0006094">
    <property type="term" value="P:gluconeogenesis"/>
    <property type="evidence" value="ECO:0007669"/>
    <property type="project" value="TreeGrafter"/>
</dbReference>
<dbReference type="GO" id="GO:0006096">
    <property type="term" value="P:glycolytic process"/>
    <property type="evidence" value="ECO:0007669"/>
    <property type="project" value="UniProtKB-UniRule"/>
</dbReference>
<dbReference type="CDD" id="cd00318">
    <property type="entry name" value="Phosphoglycerate_kinase"/>
    <property type="match status" value="1"/>
</dbReference>
<dbReference type="FunFam" id="3.40.50.1260:FF:000003">
    <property type="entry name" value="Phosphoglycerate kinase"/>
    <property type="match status" value="1"/>
</dbReference>
<dbReference type="FunFam" id="3.40.50.1260:FF:000006">
    <property type="entry name" value="Phosphoglycerate kinase"/>
    <property type="match status" value="1"/>
</dbReference>
<dbReference type="Gene3D" id="3.40.50.1260">
    <property type="entry name" value="Phosphoglycerate kinase, N-terminal domain"/>
    <property type="match status" value="2"/>
</dbReference>
<dbReference type="HAMAP" id="MF_00145">
    <property type="entry name" value="Phosphoglyc_kinase"/>
    <property type="match status" value="1"/>
</dbReference>
<dbReference type="InterPro" id="IPR001576">
    <property type="entry name" value="Phosphoglycerate_kinase"/>
</dbReference>
<dbReference type="InterPro" id="IPR015911">
    <property type="entry name" value="Phosphoglycerate_kinase_CS"/>
</dbReference>
<dbReference type="InterPro" id="IPR015824">
    <property type="entry name" value="Phosphoglycerate_kinase_N"/>
</dbReference>
<dbReference type="InterPro" id="IPR036043">
    <property type="entry name" value="Phosphoglycerate_kinase_sf"/>
</dbReference>
<dbReference type="PANTHER" id="PTHR11406">
    <property type="entry name" value="PHOSPHOGLYCERATE KINASE"/>
    <property type="match status" value="1"/>
</dbReference>
<dbReference type="PANTHER" id="PTHR11406:SF23">
    <property type="entry name" value="PHOSPHOGLYCERATE KINASE 1, CHLOROPLASTIC-RELATED"/>
    <property type="match status" value="1"/>
</dbReference>
<dbReference type="Pfam" id="PF00162">
    <property type="entry name" value="PGK"/>
    <property type="match status" value="1"/>
</dbReference>
<dbReference type="PIRSF" id="PIRSF000724">
    <property type="entry name" value="Pgk"/>
    <property type="match status" value="1"/>
</dbReference>
<dbReference type="PRINTS" id="PR00477">
    <property type="entry name" value="PHGLYCKINASE"/>
</dbReference>
<dbReference type="SUPFAM" id="SSF53748">
    <property type="entry name" value="Phosphoglycerate kinase"/>
    <property type="match status" value="1"/>
</dbReference>
<dbReference type="PROSITE" id="PS00111">
    <property type="entry name" value="PGLYCERATE_KINASE"/>
    <property type="match status" value="1"/>
</dbReference>
<sequence>MKSLKTIDVAGKRVLVRVDFNVPLDDQQQITDDTRIQSAVPTIEYLVGAGAKVIVCSHLGRPKGKPDPVFSLAPTARRLGELLDRPVEMANTCVGPDVVSRIARMAPGDVLMLENLRFHPGEANDDDAFARALAALCDVYVDDAFAVSHRANASVDAVTKYAPVCAPGFLMEKELGAFGKALENPARPFVAIVGGAKVSSKLPALQHLLQEVDRLIIGGAMANTFLAAKGVNVGKSKIEQELIGEARSVIRQAAEKKVELFLPVDVIVAEKIDPDADRQAVSVDRIPADAMALDIGPETSRLFGDALKDAKTIVWNGPMGIFEMEAFAAGTKAVAAAVADSKAFTVVGGGDTVSAVHEAGVADRISYISTGGGAFLELMEGKTLPGVAALERNQPA</sequence>
<feature type="chain" id="PRO_1000096338" description="Phosphoglycerate kinase">
    <location>
        <begin position="1"/>
        <end position="396"/>
    </location>
</feature>
<feature type="binding site" evidence="1">
    <location>
        <begin position="19"/>
        <end position="21"/>
    </location>
    <ligand>
        <name>substrate</name>
    </ligand>
</feature>
<feature type="binding site" evidence="1">
    <location>
        <position position="35"/>
    </location>
    <ligand>
        <name>substrate</name>
    </ligand>
</feature>
<feature type="binding site" evidence="1">
    <location>
        <begin position="58"/>
        <end position="61"/>
    </location>
    <ligand>
        <name>substrate</name>
    </ligand>
</feature>
<feature type="binding site" evidence="1">
    <location>
        <position position="117"/>
    </location>
    <ligand>
        <name>substrate</name>
    </ligand>
</feature>
<feature type="binding site" evidence="1">
    <location>
        <position position="150"/>
    </location>
    <ligand>
        <name>substrate</name>
    </ligand>
</feature>
<feature type="binding site" evidence="1">
    <location>
        <position position="201"/>
    </location>
    <ligand>
        <name>ATP</name>
        <dbReference type="ChEBI" id="CHEBI:30616"/>
    </ligand>
</feature>
<feature type="binding site" evidence="1">
    <location>
        <position position="323"/>
    </location>
    <ligand>
        <name>ATP</name>
        <dbReference type="ChEBI" id="CHEBI:30616"/>
    </ligand>
</feature>
<feature type="binding site" evidence="1">
    <location>
        <begin position="349"/>
        <end position="352"/>
    </location>
    <ligand>
        <name>ATP</name>
        <dbReference type="ChEBI" id="CHEBI:30616"/>
    </ligand>
</feature>
<comment type="catalytic activity">
    <reaction evidence="1">
        <text>(2R)-3-phosphoglycerate + ATP = (2R)-3-phospho-glyceroyl phosphate + ADP</text>
        <dbReference type="Rhea" id="RHEA:14801"/>
        <dbReference type="ChEBI" id="CHEBI:30616"/>
        <dbReference type="ChEBI" id="CHEBI:57604"/>
        <dbReference type="ChEBI" id="CHEBI:58272"/>
        <dbReference type="ChEBI" id="CHEBI:456216"/>
        <dbReference type="EC" id="2.7.2.3"/>
    </reaction>
</comment>
<comment type="pathway">
    <text evidence="1">Carbohydrate degradation; glycolysis; pyruvate from D-glyceraldehyde 3-phosphate: step 2/5.</text>
</comment>
<comment type="subunit">
    <text evidence="1">Monomer.</text>
</comment>
<comment type="subcellular location">
    <subcellularLocation>
        <location evidence="1">Cytoplasm</location>
    </subcellularLocation>
</comment>
<comment type="similarity">
    <text evidence="1">Belongs to the phosphoglycerate kinase family.</text>
</comment>
<keyword id="KW-0067">ATP-binding</keyword>
<keyword id="KW-0963">Cytoplasm</keyword>
<keyword id="KW-0324">Glycolysis</keyword>
<keyword id="KW-0418">Kinase</keyword>
<keyword id="KW-0547">Nucleotide-binding</keyword>
<keyword id="KW-1185">Reference proteome</keyword>
<keyword id="KW-0808">Transferase</keyword>
<accession>A8ZUS4</accession>
<proteinExistence type="inferred from homology"/>